<comment type="function">
    <text evidence="4">RNA-dependent RNA polymerase which replicates the viral genome composed of 3 RNA segments, RNA1, RNA2 and RNA3.</text>
</comment>
<comment type="catalytic activity">
    <reaction evidence="2">
        <text>RNA(n) + a ribonucleoside 5'-triphosphate = RNA(n+1) + diphosphate</text>
        <dbReference type="Rhea" id="RHEA:21248"/>
        <dbReference type="Rhea" id="RHEA-COMP:14527"/>
        <dbReference type="Rhea" id="RHEA-COMP:17342"/>
        <dbReference type="ChEBI" id="CHEBI:33019"/>
        <dbReference type="ChEBI" id="CHEBI:61557"/>
        <dbReference type="ChEBI" id="CHEBI:140395"/>
        <dbReference type="EC" id="2.7.7.48"/>
    </reaction>
</comment>
<comment type="subunit">
    <text evidence="1">Interacts with replication protein 1a.</text>
</comment>
<comment type="similarity">
    <text evidence="4">Belongs to the ssRNA positive-strand viruses RNA-directed RNA polymerase family.</text>
</comment>
<accession>O39436</accession>
<proteinExistence type="inferred from homology"/>
<sequence length="858" mass="96809">MAFPAPAFSLANLLNGSYGVDTPEEVERVRSEQRDEAAAACRNYRPLPAVDVSESVPEDAHSLRTPDGAPSEEVSVEFVTYGAEDYLEKSDDELLVAFETMVKPMRIGQLWCPAFNKCSFISSIAMARALLLAPRTSHRTMKCFEDLVAAIYTKSDFYYDDECEADDVQIDISSRDVPGYSFEPWSRTSGFEPPPICEACDMIMYQCPCFDFNALKKSCAERTFADDYVIEGLDGVVNNATLSSNLGPFLVPVKCPYEKCPTPVGEIPPDLNRATDRVDINLVQSICDSTLPTHSNYDDSFHQVFVESADYSIDLDHVRLRQSDLIAKIPDSGHMIPVLNTGSGHKRVGTTKEVLTAIKKRNADVPELGDSVNLSRLSKAVAERFFISYINGNSLASSNFVNVVSNFHDYMEKWKSSGLSYDDLPDLHAENLQFYDHMIKSDVKPVVSDTLNIDRPVPATITYHKKGITSQFSPLFTALFERFQRCLRERIILPVGKISSLEMAGFDVKNKHCFEIDLSKFDKSQGEFPFKIQEHILNGLGCPAPITKWWCDFHRFSYIRDRRAGVGMPISFQRRTGDAFTYFGNTIVTMAEFAWCYDTDQFEKLLFSGDDSLGFSVLPPVGDPSKFTTLFNMEAKVMEPAVPYICSKFLLSDEFGNTFSVPDPLREVQRLGTKKIPCSDNDEFLFAHFMSFVDRLKFLDRMTQSCIDQLSLFFELKYRKSGEEAALMLGAFKKYTANFQSYKELYYSDRRQCELINSFSCVELRIERSSSTKQREKKDGIERRRNDKRRTPTGSYGGGEEAETKVSQAESTGTRSQKSQREGAFKSQAVPLPTILSSRWFGTDRDVPPCEHGGIVRV</sequence>
<name>RDRP_CMVAS</name>
<dbReference type="EC" id="2.7.7.48"/>
<dbReference type="EMBL" id="AF033667">
    <property type="protein sequence ID" value="AAB86650.1"/>
    <property type="molecule type" value="Genomic_RNA"/>
</dbReference>
<dbReference type="GO" id="GO:0000166">
    <property type="term" value="F:nucleotide binding"/>
    <property type="evidence" value="ECO:0007669"/>
    <property type="project" value="UniProtKB-KW"/>
</dbReference>
<dbReference type="GO" id="GO:0003723">
    <property type="term" value="F:RNA binding"/>
    <property type="evidence" value="ECO:0007669"/>
    <property type="project" value="InterPro"/>
</dbReference>
<dbReference type="GO" id="GO:0003968">
    <property type="term" value="F:RNA-directed RNA polymerase activity"/>
    <property type="evidence" value="ECO:0007669"/>
    <property type="project" value="UniProtKB-KW"/>
</dbReference>
<dbReference type="GO" id="GO:0006351">
    <property type="term" value="P:DNA-templated transcription"/>
    <property type="evidence" value="ECO:0007669"/>
    <property type="project" value="InterPro"/>
</dbReference>
<dbReference type="GO" id="GO:0039690">
    <property type="term" value="P:positive stranded viral RNA replication"/>
    <property type="evidence" value="ECO:0007669"/>
    <property type="project" value="InterPro"/>
</dbReference>
<dbReference type="CDD" id="cd23252">
    <property type="entry name" value="Bromoviridae_RdRp"/>
    <property type="match status" value="1"/>
</dbReference>
<dbReference type="InterPro" id="IPR047309">
    <property type="entry name" value="Bromoviridae_RdRp"/>
</dbReference>
<dbReference type="InterPro" id="IPR043502">
    <property type="entry name" value="DNA/RNA_pol_sf"/>
</dbReference>
<dbReference type="InterPro" id="IPR001788">
    <property type="entry name" value="RNA-dep_RNA_pol_alsuvir"/>
</dbReference>
<dbReference type="InterPro" id="IPR007094">
    <property type="entry name" value="RNA-dir_pol_PSvirus"/>
</dbReference>
<dbReference type="Pfam" id="PF00978">
    <property type="entry name" value="RdRP_2"/>
    <property type="match status" value="1"/>
</dbReference>
<dbReference type="SUPFAM" id="SSF56672">
    <property type="entry name" value="DNA/RNA polymerases"/>
    <property type="match status" value="1"/>
</dbReference>
<dbReference type="PROSITE" id="PS50507">
    <property type="entry name" value="RDRP_SSRNA_POS"/>
    <property type="match status" value="1"/>
</dbReference>
<protein>
    <recommendedName>
        <fullName>RNA-directed RNA polymerase 2a</fullName>
        <shortName>protein 2a</shortName>
        <ecNumber>2.7.7.48</ecNumber>
    </recommendedName>
</protein>
<reference key="1">
    <citation type="submission" date="1997-11" db="EMBL/GenBank/DDBJ databases">
        <authorList>
            <person name="Kim S.H."/>
            <person name="Park Y.I."/>
        </authorList>
    </citation>
    <scope>NUCLEOTIDE SEQUENCE [GENOMIC RNA]</scope>
</reference>
<feature type="chain" id="PRO_0000083271" description="RNA-directed RNA polymerase 2a">
    <location>
        <begin position="1"/>
        <end position="858"/>
    </location>
</feature>
<feature type="domain" description="RdRp catalytic" evidence="2">
    <location>
        <begin position="511"/>
        <end position="624"/>
    </location>
</feature>
<feature type="region of interest" description="Disordered" evidence="3">
    <location>
        <begin position="772"/>
        <end position="830"/>
    </location>
</feature>
<feature type="compositionally biased region" description="Basic and acidic residues" evidence="3">
    <location>
        <begin position="772"/>
        <end position="785"/>
    </location>
</feature>
<feature type="compositionally biased region" description="Polar residues" evidence="3">
    <location>
        <begin position="805"/>
        <end position="817"/>
    </location>
</feature>
<keyword id="KW-0547">Nucleotide-binding</keyword>
<keyword id="KW-0548">Nucleotidyltransferase</keyword>
<keyword id="KW-0696">RNA-directed RNA polymerase</keyword>
<keyword id="KW-0808">Transferase</keyword>
<keyword id="KW-0693">Viral RNA replication</keyword>
<organism>
    <name type="scientific">Cucumber mosaic virus (strain As)</name>
    <name type="common">CMV</name>
    <dbReference type="NCBI Taxonomy" id="117118"/>
    <lineage>
        <taxon>Viruses</taxon>
        <taxon>Riboviria</taxon>
        <taxon>Orthornavirae</taxon>
        <taxon>Kitrinoviricota</taxon>
        <taxon>Alsuviricetes</taxon>
        <taxon>Martellivirales</taxon>
        <taxon>Bromoviridae</taxon>
        <taxon>Cucumovirus</taxon>
        <taxon>Cucumber mosaic virus</taxon>
    </lineage>
</organism>
<organismHost>
    <name type="scientific">Cucumis sativus</name>
    <name type="common">Cucumber</name>
    <dbReference type="NCBI Taxonomy" id="3659"/>
</organismHost>
<organismHost>
    <name type="scientific">Solanum lycopersicum</name>
    <name type="common">Tomato</name>
    <name type="synonym">Lycopersicon esculentum</name>
    <dbReference type="NCBI Taxonomy" id="4081"/>
</organismHost>
<organismHost>
    <name type="scientific">Spinacia oleracea</name>
    <name type="common">Spinach</name>
    <dbReference type="NCBI Taxonomy" id="3562"/>
</organismHost>
<gene>
    <name type="ORF">ORF2a</name>
</gene>
<evidence type="ECO:0000250" key="1"/>
<evidence type="ECO:0000255" key="2">
    <source>
        <dbReference type="PROSITE-ProRule" id="PRU00539"/>
    </source>
</evidence>
<evidence type="ECO:0000256" key="3">
    <source>
        <dbReference type="SAM" id="MobiDB-lite"/>
    </source>
</evidence>
<evidence type="ECO:0000305" key="4"/>